<keyword id="KW-0687">Ribonucleoprotein</keyword>
<keyword id="KW-0689">Ribosomal protein</keyword>
<protein>
    <recommendedName>
        <fullName evidence="1">Small ribosomal subunit protein uS9</fullName>
    </recommendedName>
    <alternativeName>
        <fullName evidence="3">30S ribosomal protein S9</fullName>
    </alternativeName>
</protein>
<gene>
    <name evidence="1" type="primary">rpsI</name>
    <name type="ordered locus">SACOL2206</name>
</gene>
<proteinExistence type="inferred from homology"/>
<accession>Q5HDZ1</accession>
<feature type="chain" id="PRO_0000111404" description="Small ribosomal subunit protein uS9">
    <location>
        <begin position="1"/>
        <end position="132"/>
    </location>
</feature>
<feature type="region of interest" description="Disordered" evidence="2">
    <location>
        <begin position="101"/>
        <end position="132"/>
    </location>
</feature>
<feature type="compositionally biased region" description="Basic residues" evidence="2">
    <location>
        <begin position="113"/>
        <end position="132"/>
    </location>
</feature>
<organism>
    <name type="scientific">Staphylococcus aureus (strain COL)</name>
    <dbReference type="NCBI Taxonomy" id="93062"/>
    <lineage>
        <taxon>Bacteria</taxon>
        <taxon>Bacillati</taxon>
        <taxon>Bacillota</taxon>
        <taxon>Bacilli</taxon>
        <taxon>Bacillales</taxon>
        <taxon>Staphylococcaceae</taxon>
        <taxon>Staphylococcus</taxon>
    </lineage>
</organism>
<name>RS9_STAAC</name>
<sequence>MTLAQVEYRGTGRRKNSVARVRLVPGEGNITVNNRDVREYLPFESLILDLNQPFDVTETKGNYDVLVNVHGGGFTGQAQAIRHGIARALLEADPEYRGSLKRAGLLTRDPRMKERKKPGLKAARRSPQFSKR</sequence>
<evidence type="ECO:0000255" key="1">
    <source>
        <dbReference type="HAMAP-Rule" id="MF_00532"/>
    </source>
</evidence>
<evidence type="ECO:0000256" key="2">
    <source>
        <dbReference type="SAM" id="MobiDB-lite"/>
    </source>
</evidence>
<evidence type="ECO:0000305" key="3"/>
<dbReference type="EMBL" id="CP000046">
    <property type="protein sequence ID" value="AAW37081.1"/>
    <property type="molecule type" value="Genomic_DNA"/>
</dbReference>
<dbReference type="SMR" id="Q5HDZ1"/>
<dbReference type="KEGG" id="sac:SACOL2206"/>
<dbReference type="HOGENOM" id="CLU_046483_2_1_9"/>
<dbReference type="Proteomes" id="UP000000530">
    <property type="component" value="Chromosome"/>
</dbReference>
<dbReference type="GO" id="GO:0022627">
    <property type="term" value="C:cytosolic small ribosomal subunit"/>
    <property type="evidence" value="ECO:0007669"/>
    <property type="project" value="TreeGrafter"/>
</dbReference>
<dbReference type="GO" id="GO:0003723">
    <property type="term" value="F:RNA binding"/>
    <property type="evidence" value="ECO:0007669"/>
    <property type="project" value="TreeGrafter"/>
</dbReference>
<dbReference type="GO" id="GO:0003735">
    <property type="term" value="F:structural constituent of ribosome"/>
    <property type="evidence" value="ECO:0007669"/>
    <property type="project" value="InterPro"/>
</dbReference>
<dbReference type="GO" id="GO:0006412">
    <property type="term" value="P:translation"/>
    <property type="evidence" value="ECO:0007669"/>
    <property type="project" value="UniProtKB-UniRule"/>
</dbReference>
<dbReference type="FunFam" id="3.30.230.10:FF:000001">
    <property type="entry name" value="30S ribosomal protein S9"/>
    <property type="match status" value="1"/>
</dbReference>
<dbReference type="Gene3D" id="3.30.230.10">
    <property type="match status" value="1"/>
</dbReference>
<dbReference type="HAMAP" id="MF_00532_B">
    <property type="entry name" value="Ribosomal_uS9_B"/>
    <property type="match status" value="1"/>
</dbReference>
<dbReference type="InterPro" id="IPR020568">
    <property type="entry name" value="Ribosomal_Su5_D2-typ_SF"/>
</dbReference>
<dbReference type="InterPro" id="IPR000754">
    <property type="entry name" value="Ribosomal_uS9"/>
</dbReference>
<dbReference type="InterPro" id="IPR023035">
    <property type="entry name" value="Ribosomal_uS9_bac/plastid"/>
</dbReference>
<dbReference type="InterPro" id="IPR020574">
    <property type="entry name" value="Ribosomal_uS9_CS"/>
</dbReference>
<dbReference type="InterPro" id="IPR014721">
    <property type="entry name" value="Ribsml_uS5_D2-typ_fold_subgr"/>
</dbReference>
<dbReference type="NCBIfam" id="NF001099">
    <property type="entry name" value="PRK00132.1"/>
    <property type="match status" value="1"/>
</dbReference>
<dbReference type="PANTHER" id="PTHR21569">
    <property type="entry name" value="RIBOSOMAL PROTEIN S9"/>
    <property type="match status" value="1"/>
</dbReference>
<dbReference type="PANTHER" id="PTHR21569:SF1">
    <property type="entry name" value="SMALL RIBOSOMAL SUBUNIT PROTEIN US9M"/>
    <property type="match status" value="1"/>
</dbReference>
<dbReference type="Pfam" id="PF00380">
    <property type="entry name" value="Ribosomal_S9"/>
    <property type="match status" value="1"/>
</dbReference>
<dbReference type="SUPFAM" id="SSF54211">
    <property type="entry name" value="Ribosomal protein S5 domain 2-like"/>
    <property type="match status" value="1"/>
</dbReference>
<dbReference type="PROSITE" id="PS00360">
    <property type="entry name" value="RIBOSOMAL_S9"/>
    <property type="match status" value="1"/>
</dbReference>
<comment type="similarity">
    <text evidence="1">Belongs to the universal ribosomal protein uS9 family.</text>
</comment>
<reference key="1">
    <citation type="journal article" date="2005" name="J. Bacteriol.">
        <title>Insights on evolution of virulence and resistance from the complete genome analysis of an early methicillin-resistant Staphylococcus aureus strain and a biofilm-producing methicillin-resistant Staphylococcus epidermidis strain.</title>
        <authorList>
            <person name="Gill S.R."/>
            <person name="Fouts D.E."/>
            <person name="Archer G.L."/>
            <person name="Mongodin E.F."/>
            <person name="DeBoy R.T."/>
            <person name="Ravel J."/>
            <person name="Paulsen I.T."/>
            <person name="Kolonay J.F."/>
            <person name="Brinkac L.M."/>
            <person name="Beanan M.J."/>
            <person name="Dodson R.J."/>
            <person name="Daugherty S.C."/>
            <person name="Madupu R."/>
            <person name="Angiuoli S.V."/>
            <person name="Durkin A.S."/>
            <person name="Haft D.H."/>
            <person name="Vamathevan J.J."/>
            <person name="Khouri H."/>
            <person name="Utterback T.R."/>
            <person name="Lee C."/>
            <person name="Dimitrov G."/>
            <person name="Jiang L."/>
            <person name="Qin H."/>
            <person name="Weidman J."/>
            <person name="Tran K."/>
            <person name="Kang K.H."/>
            <person name="Hance I.R."/>
            <person name="Nelson K.E."/>
            <person name="Fraser C.M."/>
        </authorList>
    </citation>
    <scope>NUCLEOTIDE SEQUENCE [LARGE SCALE GENOMIC DNA]</scope>
    <source>
        <strain>COL</strain>
    </source>
</reference>